<feature type="chain" id="PRO_0000334377" description="Na(+)/H(+) antiporter NhaA 1">
    <location>
        <begin position="1"/>
        <end position="391"/>
    </location>
</feature>
<feature type="transmembrane region" description="Helical" evidence="1">
    <location>
        <begin position="25"/>
        <end position="45"/>
    </location>
</feature>
<feature type="transmembrane region" description="Helical" evidence="1">
    <location>
        <begin position="56"/>
        <end position="76"/>
    </location>
</feature>
<feature type="transmembrane region" description="Helical" evidence="1">
    <location>
        <begin position="98"/>
        <end position="118"/>
    </location>
</feature>
<feature type="transmembrane region" description="Helical" evidence="1">
    <location>
        <begin position="128"/>
        <end position="148"/>
    </location>
</feature>
<feature type="transmembrane region" description="Helical" evidence="1">
    <location>
        <begin position="157"/>
        <end position="177"/>
    </location>
</feature>
<feature type="transmembrane region" description="Helical" evidence="1">
    <location>
        <begin position="180"/>
        <end position="200"/>
    </location>
</feature>
<feature type="transmembrane region" description="Helical" evidence="1">
    <location>
        <begin position="208"/>
        <end position="228"/>
    </location>
</feature>
<feature type="transmembrane region" description="Helical" evidence="1">
    <location>
        <begin position="264"/>
        <end position="284"/>
    </location>
</feature>
<feature type="transmembrane region" description="Helical" evidence="1">
    <location>
        <begin position="297"/>
        <end position="317"/>
    </location>
</feature>
<feature type="transmembrane region" description="Helical" evidence="1">
    <location>
        <begin position="335"/>
        <end position="355"/>
    </location>
</feature>
<feature type="transmembrane region" description="Helical" evidence="1">
    <location>
        <begin position="364"/>
        <end position="384"/>
    </location>
</feature>
<dbReference type="EMBL" id="CP000075">
    <property type="protein sequence ID" value="AAY35436.1"/>
    <property type="molecule type" value="Genomic_DNA"/>
</dbReference>
<dbReference type="RefSeq" id="WP_011266353.1">
    <property type="nucleotide sequence ID" value="NC_007005.1"/>
</dbReference>
<dbReference type="RefSeq" id="YP_233474.1">
    <property type="nucleotide sequence ID" value="NC_007005.1"/>
</dbReference>
<dbReference type="SMR" id="Q4ZZI6"/>
<dbReference type="STRING" id="205918.Psyr_0364"/>
<dbReference type="KEGG" id="psb:Psyr_0364"/>
<dbReference type="PATRIC" id="fig|205918.7.peg.371"/>
<dbReference type="eggNOG" id="COG3004">
    <property type="taxonomic scope" value="Bacteria"/>
</dbReference>
<dbReference type="HOGENOM" id="CLU_015803_1_0_6"/>
<dbReference type="OrthoDB" id="9808135at2"/>
<dbReference type="Proteomes" id="UP000000426">
    <property type="component" value="Chromosome"/>
</dbReference>
<dbReference type="GO" id="GO:0005886">
    <property type="term" value="C:plasma membrane"/>
    <property type="evidence" value="ECO:0007669"/>
    <property type="project" value="UniProtKB-SubCell"/>
</dbReference>
<dbReference type="GO" id="GO:0015385">
    <property type="term" value="F:sodium:proton antiporter activity"/>
    <property type="evidence" value="ECO:0007669"/>
    <property type="project" value="TreeGrafter"/>
</dbReference>
<dbReference type="GO" id="GO:0006885">
    <property type="term" value="P:regulation of pH"/>
    <property type="evidence" value="ECO:0007669"/>
    <property type="project" value="InterPro"/>
</dbReference>
<dbReference type="Gene3D" id="1.20.1530.10">
    <property type="entry name" value="Na+/H+ antiporter like domain"/>
    <property type="match status" value="1"/>
</dbReference>
<dbReference type="HAMAP" id="MF_01844">
    <property type="entry name" value="NhaA"/>
    <property type="match status" value="1"/>
</dbReference>
<dbReference type="InterPro" id="IPR023171">
    <property type="entry name" value="Na/H_antiporter_dom_sf"/>
</dbReference>
<dbReference type="InterPro" id="IPR004670">
    <property type="entry name" value="NhaA"/>
</dbReference>
<dbReference type="NCBIfam" id="TIGR00773">
    <property type="entry name" value="NhaA"/>
    <property type="match status" value="1"/>
</dbReference>
<dbReference type="NCBIfam" id="NF007111">
    <property type="entry name" value="PRK09560.1"/>
    <property type="match status" value="1"/>
</dbReference>
<dbReference type="NCBIfam" id="NF007112">
    <property type="entry name" value="PRK09561.1"/>
    <property type="match status" value="1"/>
</dbReference>
<dbReference type="PANTHER" id="PTHR30341:SF0">
    <property type="entry name" value="NA(+)_H(+) ANTIPORTER NHAA"/>
    <property type="match status" value="1"/>
</dbReference>
<dbReference type="PANTHER" id="PTHR30341">
    <property type="entry name" value="SODIUM ION/PROTON ANTIPORTER NHAA-RELATED"/>
    <property type="match status" value="1"/>
</dbReference>
<dbReference type="Pfam" id="PF06965">
    <property type="entry name" value="Na_H_antiport_1"/>
    <property type="match status" value="1"/>
</dbReference>
<sequence length="391" mass="40978">MTQVPNRETPRGIAILARFLASESAGGIVLMVAALAALIVANSPLSAGYFSILHSVWLGLSVELWINDGLMAIFFLMVGLEIKREVLAGGLASWGQRALPGFAAAGGMLVPALIYIAINWGNPQTLSGWAIPAATDIAFALGVLSLLGNRVPTSLKVFLAALAILDDLGAVTIIAFFYSAGLNLPMLAAAFVTLAVLIVMNRLNVRRLLPYLLLGALLWFFVLQSGVHATLAGVALALCIPMGKPEEEARSPLLFLEEKMHYWVAFAVVPIFGFANAGVSLAGITLGNLVDPVPLGVALGLFVGKQIGVFLAAVLAIRAGLAVLPEGSNWVQLYGVAMLCGIGFTMSLFIGNLAFPGSQHLIDEVKVGVLIGSGLAAIAGIVLLRSRFSRP</sequence>
<keyword id="KW-0050">Antiport</keyword>
<keyword id="KW-0997">Cell inner membrane</keyword>
<keyword id="KW-1003">Cell membrane</keyword>
<keyword id="KW-0406">Ion transport</keyword>
<keyword id="KW-0472">Membrane</keyword>
<keyword id="KW-0915">Sodium</keyword>
<keyword id="KW-0739">Sodium transport</keyword>
<keyword id="KW-0812">Transmembrane</keyword>
<keyword id="KW-1133">Transmembrane helix</keyword>
<keyword id="KW-0813">Transport</keyword>
<comment type="function">
    <text evidence="1">Na(+)/H(+) antiporter that extrudes sodium in exchange for external protons.</text>
</comment>
<comment type="catalytic activity">
    <reaction evidence="1">
        <text>Na(+)(in) + 2 H(+)(out) = Na(+)(out) + 2 H(+)(in)</text>
        <dbReference type="Rhea" id="RHEA:29251"/>
        <dbReference type="ChEBI" id="CHEBI:15378"/>
        <dbReference type="ChEBI" id="CHEBI:29101"/>
    </reaction>
    <physiologicalReaction direction="left-to-right" evidence="1">
        <dbReference type="Rhea" id="RHEA:29252"/>
    </physiologicalReaction>
</comment>
<comment type="subcellular location">
    <subcellularLocation>
        <location evidence="1">Cell inner membrane</location>
        <topology evidence="1">Multi-pass membrane protein</topology>
    </subcellularLocation>
</comment>
<comment type="similarity">
    <text evidence="1">Belongs to the NhaA Na(+)/H(+) (TC 2.A.33) antiporter family.</text>
</comment>
<gene>
    <name evidence="1" type="primary">nhaA1</name>
    <name type="ordered locus">Psyr_0364</name>
</gene>
<name>NHAA1_PSEU2</name>
<protein>
    <recommendedName>
        <fullName evidence="1">Na(+)/H(+) antiporter NhaA 1</fullName>
    </recommendedName>
    <alternativeName>
        <fullName evidence="1">Sodium/proton antiporter NhaA 1</fullName>
    </alternativeName>
</protein>
<evidence type="ECO:0000255" key="1">
    <source>
        <dbReference type="HAMAP-Rule" id="MF_01844"/>
    </source>
</evidence>
<reference key="1">
    <citation type="journal article" date="2005" name="Proc. Natl. Acad. Sci. U.S.A.">
        <title>Comparison of the complete genome sequences of Pseudomonas syringae pv. syringae B728a and pv. tomato DC3000.</title>
        <authorList>
            <person name="Feil H."/>
            <person name="Feil W.S."/>
            <person name="Chain P."/>
            <person name="Larimer F."/>
            <person name="Dibartolo G."/>
            <person name="Copeland A."/>
            <person name="Lykidis A."/>
            <person name="Trong S."/>
            <person name="Nolan M."/>
            <person name="Goltsman E."/>
            <person name="Thiel J."/>
            <person name="Malfatti S."/>
            <person name="Loper J.E."/>
            <person name="Lapidus A."/>
            <person name="Detter J.C."/>
            <person name="Land M."/>
            <person name="Richardson P.M."/>
            <person name="Kyrpides N.C."/>
            <person name="Ivanova N."/>
            <person name="Lindow S.E."/>
        </authorList>
    </citation>
    <scope>NUCLEOTIDE SEQUENCE [LARGE SCALE GENOMIC DNA]</scope>
    <source>
        <strain>B728a</strain>
    </source>
</reference>
<proteinExistence type="inferred from homology"/>
<accession>Q4ZZI6</accession>
<organism>
    <name type="scientific">Pseudomonas syringae pv. syringae (strain B728a)</name>
    <dbReference type="NCBI Taxonomy" id="205918"/>
    <lineage>
        <taxon>Bacteria</taxon>
        <taxon>Pseudomonadati</taxon>
        <taxon>Pseudomonadota</taxon>
        <taxon>Gammaproteobacteria</taxon>
        <taxon>Pseudomonadales</taxon>
        <taxon>Pseudomonadaceae</taxon>
        <taxon>Pseudomonas</taxon>
        <taxon>Pseudomonas syringae</taxon>
    </lineage>
</organism>